<keyword id="KW-1185">Reference proteome</keyword>
<accession>Q6DEF4</accession>
<accession>A3KQQ8</accession>
<sequence length="208" mass="22880">MAEFSPVLPPLRDDGGGGRYGQPLFPRSRSGSESDSELSQSLARTKTRSYGSTASVTAPLGEKYIEHRVTDGETLQGIALKYGVTMEQIKRVNKLFSNDCIFLRNTLSIPVKSEKRSLFNGLSLESPDSEGNTPQESPCVSQDVDAPSPPPEPSVPEPNTRPVQAEELSAKDYLHRLDLQIKQSKLAARKLKEDGGREEDDTNSYQEI</sequence>
<reference key="1">
    <citation type="journal article" date="2013" name="Nature">
        <title>The zebrafish reference genome sequence and its relationship to the human genome.</title>
        <authorList>
            <person name="Howe K."/>
            <person name="Clark M.D."/>
            <person name="Torroja C.F."/>
            <person name="Torrance J."/>
            <person name="Berthelot C."/>
            <person name="Muffato M."/>
            <person name="Collins J.E."/>
            <person name="Humphray S."/>
            <person name="McLaren K."/>
            <person name="Matthews L."/>
            <person name="McLaren S."/>
            <person name="Sealy I."/>
            <person name="Caccamo M."/>
            <person name="Churcher C."/>
            <person name="Scott C."/>
            <person name="Barrett J.C."/>
            <person name="Koch R."/>
            <person name="Rauch G.J."/>
            <person name="White S."/>
            <person name="Chow W."/>
            <person name="Kilian B."/>
            <person name="Quintais L.T."/>
            <person name="Guerra-Assuncao J.A."/>
            <person name="Zhou Y."/>
            <person name="Gu Y."/>
            <person name="Yen J."/>
            <person name="Vogel J.H."/>
            <person name="Eyre T."/>
            <person name="Redmond S."/>
            <person name="Banerjee R."/>
            <person name="Chi J."/>
            <person name="Fu B."/>
            <person name="Langley E."/>
            <person name="Maguire S.F."/>
            <person name="Laird G.K."/>
            <person name="Lloyd D."/>
            <person name="Kenyon E."/>
            <person name="Donaldson S."/>
            <person name="Sehra H."/>
            <person name="Almeida-King J."/>
            <person name="Loveland J."/>
            <person name="Trevanion S."/>
            <person name="Jones M."/>
            <person name="Quail M."/>
            <person name="Willey D."/>
            <person name="Hunt A."/>
            <person name="Burton J."/>
            <person name="Sims S."/>
            <person name="McLay K."/>
            <person name="Plumb B."/>
            <person name="Davis J."/>
            <person name="Clee C."/>
            <person name="Oliver K."/>
            <person name="Clark R."/>
            <person name="Riddle C."/>
            <person name="Elliot D."/>
            <person name="Threadgold G."/>
            <person name="Harden G."/>
            <person name="Ware D."/>
            <person name="Begum S."/>
            <person name="Mortimore B."/>
            <person name="Kerry G."/>
            <person name="Heath P."/>
            <person name="Phillimore B."/>
            <person name="Tracey A."/>
            <person name="Corby N."/>
            <person name="Dunn M."/>
            <person name="Johnson C."/>
            <person name="Wood J."/>
            <person name="Clark S."/>
            <person name="Pelan S."/>
            <person name="Griffiths G."/>
            <person name="Smith M."/>
            <person name="Glithero R."/>
            <person name="Howden P."/>
            <person name="Barker N."/>
            <person name="Lloyd C."/>
            <person name="Stevens C."/>
            <person name="Harley J."/>
            <person name="Holt K."/>
            <person name="Panagiotidis G."/>
            <person name="Lovell J."/>
            <person name="Beasley H."/>
            <person name="Henderson C."/>
            <person name="Gordon D."/>
            <person name="Auger K."/>
            <person name="Wright D."/>
            <person name="Collins J."/>
            <person name="Raisen C."/>
            <person name="Dyer L."/>
            <person name="Leung K."/>
            <person name="Robertson L."/>
            <person name="Ambridge K."/>
            <person name="Leongamornlert D."/>
            <person name="McGuire S."/>
            <person name="Gilderthorp R."/>
            <person name="Griffiths C."/>
            <person name="Manthravadi D."/>
            <person name="Nichol S."/>
            <person name="Barker G."/>
            <person name="Whitehead S."/>
            <person name="Kay M."/>
            <person name="Brown J."/>
            <person name="Murnane C."/>
            <person name="Gray E."/>
            <person name="Humphries M."/>
            <person name="Sycamore N."/>
            <person name="Barker D."/>
            <person name="Saunders D."/>
            <person name="Wallis J."/>
            <person name="Babbage A."/>
            <person name="Hammond S."/>
            <person name="Mashreghi-Mohammadi M."/>
            <person name="Barr L."/>
            <person name="Martin S."/>
            <person name="Wray P."/>
            <person name="Ellington A."/>
            <person name="Matthews N."/>
            <person name="Ellwood M."/>
            <person name="Woodmansey R."/>
            <person name="Clark G."/>
            <person name="Cooper J."/>
            <person name="Tromans A."/>
            <person name="Grafham D."/>
            <person name="Skuce C."/>
            <person name="Pandian R."/>
            <person name="Andrews R."/>
            <person name="Harrison E."/>
            <person name="Kimberley A."/>
            <person name="Garnett J."/>
            <person name="Fosker N."/>
            <person name="Hall R."/>
            <person name="Garner P."/>
            <person name="Kelly D."/>
            <person name="Bird C."/>
            <person name="Palmer S."/>
            <person name="Gehring I."/>
            <person name="Berger A."/>
            <person name="Dooley C.M."/>
            <person name="Ersan-Urun Z."/>
            <person name="Eser C."/>
            <person name="Geiger H."/>
            <person name="Geisler M."/>
            <person name="Karotki L."/>
            <person name="Kirn A."/>
            <person name="Konantz J."/>
            <person name="Konantz M."/>
            <person name="Oberlander M."/>
            <person name="Rudolph-Geiger S."/>
            <person name="Teucke M."/>
            <person name="Lanz C."/>
            <person name="Raddatz G."/>
            <person name="Osoegawa K."/>
            <person name="Zhu B."/>
            <person name="Rapp A."/>
            <person name="Widaa S."/>
            <person name="Langford C."/>
            <person name="Yang F."/>
            <person name="Schuster S.C."/>
            <person name="Carter N.P."/>
            <person name="Harrow J."/>
            <person name="Ning Z."/>
            <person name="Herrero J."/>
            <person name="Searle S.M."/>
            <person name="Enright A."/>
            <person name="Geisler R."/>
            <person name="Plasterk R.H."/>
            <person name="Lee C."/>
            <person name="Westerfield M."/>
            <person name="de Jong P.J."/>
            <person name="Zon L.I."/>
            <person name="Postlethwait J.H."/>
            <person name="Nusslein-Volhard C."/>
            <person name="Hubbard T.J."/>
            <person name="Roest Crollius H."/>
            <person name="Rogers J."/>
            <person name="Stemple D.L."/>
        </authorList>
    </citation>
    <scope>NUCLEOTIDE SEQUENCE [LARGE SCALE GENOMIC DNA]</scope>
    <source>
        <strain>Tuebingen</strain>
    </source>
</reference>
<reference key="2">
    <citation type="submission" date="2004-07" db="EMBL/GenBank/DDBJ databases">
        <authorList>
            <consortium name="NIH - Zebrafish Gene Collection (ZGC) project"/>
        </authorList>
    </citation>
    <scope>NUCLEOTIDE SEQUENCE [LARGE SCALE MRNA]</scope>
</reference>
<feature type="chain" id="PRO_0000248004" description="LysM and putative peptidoglycan-binding domain-containing protein 2">
    <location>
        <begin position="1"/>
        <end position="208"/>
    </location>
</feature>
<feature type="domain" description="LysM" evidence="1">
    <location>
        <begin position="65"/>
        <end position="109"/>
    </location>
</feature>
<feature type="region of interest" description="Disordered" evidence="2">
    <location>
        <begin position="1"/>
        <end position="54"/>
    </location>
</feature>
<feature type="region of interest" description="Disordered" evidence="2">
    <location>
        <begin position="122"/>
        <end position="169"/>
    </location>
</feature>
<feature type="region of interest" description="Disordered" evidence="2">
    <location>
        <begin position="187"/>
        <end position="208"/>
    </location>
</feature>
<feature type="compositionally biased region" description="Low complexity" evidence="2">
    <location>
        <begin position="27"/>
        <end position="42"/>
    </location>
</feature>
<feature type="compositionally biased region" description="Polar residues" evidence="2">
    <location>
        <begin position="129"/>
        <end position="140"/>
    </location>
</feature>
<feature type="compositionally biased region" description="Pro residues" evidence="2">
    <location>
        <begin position="147"/>
        <end position="156"/>
    </location>
</feature>
<gene>
    <name type="primary">lysmd2</name>
    <name type="ORF">si:ch211-12a1.4</name>
    <name type="ORF">zgc:91941</name>
</gene>
<proteinExistence type="evidence at transcript level"/>
<name>LYSM2_DANRE</name>
<evidence type="ECO:0000255" key="1">
    <source>
        <dbReference type="PROSITE-ProRule" id="PRU01118"/>
    </source>
</evidence>
<evidence type="ECO:0000256" key="2">
    <source>
        <dbReference type="SAM" id="MobiDB-lite"/>
    </source>
</evidence>
<protein>
    <recommendedName>
        <fullName>LysM and putative peptidoglycan-binding domain-containing protein 2</fullName>
    </recommendedName>
</protein>
<dbReference type="EMBL" id="BX927313">
    <property type="protein sequence ID" value="CAM56317.1"/>
    <property type="molecule type" value="Genomic_DNA"/>
</dbReference>
<dbReference type="EMBL" id="BC077165">
    <property type="protein sequence ID" value="AAH77165.1"/>
    <property type="molecule type" value="mRNA"/>
</dbReference>
<dbReference type="RefSeq" id="NP_001003507.1">
    <property type="nucleotide sequence ID" value="NM_001003507.1"/>
</dbReference>
<dbReference type="SMR" id="Q6DEF4"/>
<dbReference type="FunCoup" id="Q6DEF4">
    <property type="interactions" value="459"/>
</dbReference>
<dbReference type="STRING" id="7955.ENSDARP00000111919"/>
<dbReference type="PaxDb" id="7955-ENSDARP00000111919"/>
<dbReference type="Ensembl" id="ENSDART00000127955">
    <property type="protein sequence ID" value="ENSDARP00000111919"/>
    <property type="gene ID" value="ENSDARG00000091771"/>
</dbReference>
<dbReference type="GeneID" id="445113"/>
<dbReference type="KEGG" id="dre:445113"/>
<dbReference type="AGR" id="ZFIN:ZDB-GENE-040801-250"/>
<dbReference type="CTD" id="256586"/>
<dbReference type="ZFIN" id="ZDB-GENE-040801-250">
    <property type="gene designation" value="lysmd2"/>
</dbReference>
<dbReference type="eggNOG" id="ENOG502S0XR">
    <property type="taxonomic scope" value="Eukaryota"/>
</dbReference>
<dbReference type="HOGENOM" id="CLU_079453_1_0_1"/>
<dbReference type="InParanoid" id="Q6DEF4"/>
<dbReference type="OrthoDB" id="2107166at2759"/>
<dbReference type="PhylomeDB" id="Q6DEF4"/>
<dbReference type="TreeFam" id="TF318444"/>
<dbReference type="PRO" id="PR:Q6DEF4"/>
<dbReference type="Proteomes" id="UP000000437">
    <property type="component" value="Alternate scaffold 18"/>
</dbReference>
<dbReference type="Proteomes" id="UP000000437">
    <property type="component" value="Chromosome 18"/>
</dbReference>
<dbReference type="Bgee" id="ENSDARG00000091771">
    <property type="expression patterns" value="Expressed in early embryo and 27 other cell types or tissues"/>
</dbReference>
<dbReference type="ExpressionAtlas" id="Q6DEF4">
    <property type="expression patterns" value="baseline and differential"/>
</dbReference>
<dbReference type="CDD" id="cd00118">
    <property type="entry name" value="LysM"/>
    <property type="match status" value="1"/>
</dbReference>
<dbReference type="Gene3D" id="3.10.350.10">
    <property type="entry name" value="LysM domain"/>
    <property type="match status" value="1"/>
</dbReference>
<dbReference type="InterPro" id="IPR045030">
    <property type="entry name" value="LYSM1-4"/>
</dbReference>
<dbReference type="InterPro" id="IPR018392">
    <property type="entry name" value="LysM_dom"/>
</dbReference>
<dbReference type="InterPro" id="IPR036779">
    <property type="entry name" value="LysM_dom_sf"/>
</dbReference>
<dbReference type="PANTHER" id="PTHR20932:SF4">
    <property type="entry name" value="AND PUTATIVE PEPTIDOGLYCAN-BINDING DOMAIN-CONTAINING PROTEIN 2-RELATED"/>
    <property type="match status" value="1"/>
</dbReference>
<dbReference type="PANTHER" id="PTHR20932">
    <property type="entry name" value="LYSM AND PUTATIVE PEPTIDOGLYCAN-BINDING DOMAIN-CONTAINING PROTEIN"/>
    <property type="match status" value="1"/>
</dbReference>
<dbReference type="Pfam" id="PF01476">
    <property type="entry name" value="LysM"/>
    <property type="match status" value="1"/>
</dbReference>
<dbReference type="SMART" id="SM00257">
    <property type="entry name" value="LysM"/>
    <property type="match status" value="1"/>
</dbReference>
<dbReference type="SUPFAM" id="SSF54106">
    <property type="entry name" value="LysM domain"/>
    <property type="match status" value="1"/>
</dbReference>
<dbReference type="PROSITE" id="PS51782">
    <property type="entry name" value="LYSM"/>
    <property type="match status" value="1"/>
</dbReference>
<organism>
    <name type="scientific">Danio rerio</name>
    <name type="common">Zebrafish</name>
    <name type="synonym">Brachydanio rerio</name>
    <dbReference type="NCBI Taxonomy" id="7955"/>
    <lineage>
        <taxon>Eukaryota</taxon>
        <taxon>Metazoa</taxon>
        <taxon>Chordata</taxon>
        <taxon>Craniata</taxon>
        <taxon>Vertebrata</taxon>
        <taxon>Euteleostomi</taxon>
        <taxon>Actinopterygii</taxon>
        <taxon>Neopterygii</taxon>
        <taxon>Teleostei</taxon>
        <taxon>Ostariophysi</taxon>
        <taxon>Cypriniformes</taxon>
        <taxon>Danionidae</taxon>
        <taxon>Danioninae</taxon>
        <taxon>Danio</taxon>
    </lineage>
</organism>